<protein>
    <recommendedName>
        <fullName evidence="1">DNA-directed RNA polymerase subunit omega</fullName>
        <shortName evidence="1">RNAP omega subunit</shortName>
        <ecNumber evidence="1">2.7.7.6</ecNumber>
    </recommendedName>
    <alternativeName>
        <fullName evidence="1">RNA polymerase omega subunit</fullName>
    </alternativeName>
    <alternativeName>
        <fullName evidence="1">Transcriptase subunit omega</fullName>
    </alternativeName>
</protein>
<gene>
    <name evidence="1" type="primary">rpoZ</name>
    <name type="ordered locus">CHY_1487</name>
</gene>
<dbReference type="EC" id="2.7.7.6" evidence="1"/>
<dbReference type="EMBL" id="CP000141">
    <property type="protein sequence ID" value="ABB16246.1"/>
    <property type="molecule type" value="Genomic_DNA"/>
</dbReference>
<dbReference type="RefSeq" id="WP_011344394.1">
    <property type="nucleotide sequence ID" value="NC_007503.1"/>
</dbReference>
<dbReference type="SMR" id="Q3AC15"/>
<dbReference type="FunCoup" id="Q3AC15">
    <property type="interactions" value="18"/>
</dbReference>
<dbReference type="STRING" id="246194.CHY_1487"/>
<dbReference type="KEGG" id="chy:CHY_1487"/>
<dbReference type="eggNOG" id="COG1758">
    <property type="taxonomic scope" value="Bacteria"/>
</dbReference>
<dbReference type="HOGENOM" id="CLU_125406_6_1_9"/>
<dbReference type="InParanoid" id="Q3AC15"/>
<dbReference type="OrthoDB" id="9815459at2"/>
<dbReference type="Proteomes" id="UP000002706">
    <property type="component" value="Chromosome"/>
</dbReference>
<dbReference type="GO" id="GO:0000428">
    <property type="term" value="C:DNA-directed RNA polymerase complex"/>
    <property type="evidence" value="ECO:0007669"/>
    <property type="project" value="UniProtKB-KW"/>
</dbReference>
<dbReference type="GO" id="GO:0003677">
    <property type="term" value="F:DNA binding"/>
    <property type="evidence" value="ECO:0007669"/>
    <property type="project" value="UniProtKB-UniRule"/>
</dbReference>
<dbReference type="GO" id="GO:0003899">
    <property type="term" value="F:DNA-directed RNA polymerase activity"/>
    <property type="evidence" value="ECO:0007669"/>
    <property type="project" value="UniProtKB-UniRule"/>
</dbReference>
<dbReference type="GO" id="GO:0006351">
    <property type="term" value="P:DNA-templated transcription"/>
    <property type="evidence" value="ECO:0007669"/>
    <property type="project" value="UniProtKB-UniRule"/>
</dbReference>
<dbReference type="Gene3D" id="3.90.940.10">
    <property type="match status" value="1"/>
</dbReference>
<dbReference type="HAMAP" id="MF_00366">
    <property type="entry name" value="RNApol_bact_RpoZ"/>
    <property type="match status" value="1"/>
</dbReference>
<dbReference type="InterPro" id="IPR003716">
    <property type="entry name" value="DNA-dir_RNA_pol_omega"/>
</dbReference>
<dbReference type="InterPro" id="IPR006110">
    <property type="entry name" value="Pol_omega/Rpo6/RPB6"/>
</dbReference>
<dbReference type="InterPro" id="IPR036161">
    <property type="entry name" value="RPB6/omega-like_sf"/>
</dbReference>
<dbReference type="NCBIfam" id="TIGR00690">
    <property type="entry name" value="rpoZ"/>
    <property type="match status" value="1"/>
</dbReference>
<dbReference type="PANTHER" id="PTHR34476">
    <property type="entry name" value="DNA-DIRECTED RNA POLYMERASE SUBUNIT OMEGA"/>
    <property type="match status" value="1"/>
</dbReference>
<dbReference type="PANTHER" id="PTHR34476:SF1">
    <property type="entry name" value="DNA-DIRECTED RNA POLYMERASE SUBUNIT OMEGA"/>
    <property type="match status" value="1"/>
</dbReference>
<dbReference type="Pfam" id="PF01192">
    <property type="entry name" value="RNA_pol_Rpb6"/>
    <property type="match status" value="1"/>
</dbReference>
<dbReference type="SMART" id="SM01409">
    <property type="entry name" value="RNA_pol_Rpb6"/>
    <property type="match status" value="1"/>
</dbReference>
<dbReference type="SUPFAM" id="SSF63562">
    <property type="entry name" value="RPB6/omega subunit-like"/>
    <property type="match status" value="1"/>
</dbReference>
<keyword id="KW-0240">DNA-directed RNA polymerase</keyword>
<keyword id="KW-0548">Nucleotidyltransferase</keyword>
<keyword id="KW-1185">Reference proteome</keyword>
<keyword id="KW-0804">Transcription</keyword>
<keyword id="KW-0808">Transferase</keyword>
<comment type="function">
    <text evidence="1">Promotes RNA polymerase assembly. Latches the N- and C-terminal regions of the beta' subunit thereby facilitating its interaction with the beta and alpha subunits.</text>
</comment>
<comment type="catalytic activity">
    <reaction evidence="1">
        <text>RNA(n) + a ribonucleoside 5'-triphosphate = RNA(n+1) + diphosphate</text>
        <dbReference type="Rhea" id="RHEA:21248"/>
        <dbReference type="Rhea" id="RHEA-COMP:14527"/>
        <dbReference type="Rhea" id="RHEA-COMP:17342"/>
        <dbReference type="ChEBI" id="CHEBI:33019"/>
        <dbReference type="ChEBI" id="CHEBI:61557"/>
        <dbReference type="ChEBI" id="CHEBI:140395"/>
        <dbReference type="EC" id="2.7.7.6"/>
    </reaction>
</comment>
<comment type="subunit">
    <text evidence="1">The RNAP catalytic core consists of 2 alpha, 1 beta, 1 beta' and 1 omega subunit. When a sigma factor is associated with the core the holoenzyme is formed, which can initiate transcription.</text>
</comment>
<comment type="similarity">
    <text evidence="1">Belongs to the RNA polymerase subunit omega family.</text>
</comment>
<name>RPOZ_CARHZ</name>
<proteinExistence type="inferred from homology"/>
<organism>
    <name type="scientific">Carboxydothermus hydrogenoformans (strain ATCC BAA-161 / DSM 6008 / Z-2901)</name>
    <dbReference type="NCBI Taxonomy" id="246194"/>
    <lineage>
        <taxon>Bacteria</taxon>
        <taxon>Bacillati</taxon>
        <taxon>Bacillota</taxon>
        <taxon>Clostridia</taxon>
        <taxon>Thermoanaerobacterales</taxon>
        <taxon>Thermoanaerobacteraceae</taxon>
        <taxon>Carboxydothermus</taxon>
    </lineage>
</organism>
<evidence type="ECO:0000255" key="1">
    <source>
        <dbReference type="HAMAP-Rule" id="MF_00366"/>
    </source>
</evidence>
<feature type="chain" id="PRO_0000237448" description="DNA-directed RNA polymerase subunit omega">
    <location>
        <begin position="1"/>
        <end position="69"/>
    </location>
</feature>
<sequence>MNQPSLDILMKKADSRYTLVVATAKRARQITAGESSKLKHISNKPVTIALHEIGNDLITYQRLKSSQNK</sequence>
<reference key="1">
    <citation type="journal article" date="2005" name="PLoS Genet.">
        <title>Life in hot carbon monoxide: the complete genome sequence of Carboxydothermus hydrogenoformans Z-2901.</title>
        <authorList>
            <person name="Wu M."/>
            <person name="Ren Q."/>
            <person name="Durkin A.S."/>
            <person name="Daugherty S.C."/>
            <person name="Brinkac L.M."/>
            <person name="Dodson R.J."/>
            <person name="Madupu R."/>
            <person name="Sullivan S.A."/>
            <person name="Kolonay J.F."/>
            <person name="Nelson W.C."/>
            <person name="Tallon L.J."/>
            <person name="Jones K.M."/>
            <person name="Ulrich L.E."/>
            <person name="Gonzalez J.M."/>
            <person name="Zhulin I.B."/>
            <person name="Robb F.T."/>
            <person name="Eisen J.A."/>
        </authorList>
    </citation>
    <scope>NUCLEOTIDE SEQUENCE [LARGE SCALE GENOMIC DNA]</scope>
    <source>
        <strain>ATCC BAA-161 / DSM 6008 / Z-2901</strain>
    </source>
</reference>
<accession>Q3AC15</accession>